<accession>Q49LS7</accession>
<accession>Q4SYX9</accession>
<dbReference type="EMBL" id="AY702902">
    <property type="protein sequence ID" value="AAU94455.1"/>
    <property type="molecule type" value="mRNA"/>
</dbReference>
<dbReference type="EMBL" id="CAAE01011909">
    <property type="protein sequence ID" value="CAF94153.1"/>
    <property type="status" value="ALT_SEQ"/>
    <property type="molecule type" value="Genomic_DNA"/>
</dbReference>
<dbReference type="SMR" id="Q49LS7"/>
<dbReference type="FunCoup" id="Q49LS7">
    <property type="interactions" value="209"/>
</dbReference>
<dbReference type="TCDB" id="2.A.112.1.17">
    <property type="family name" value="the kx blood-group antigen (kxa) family"/>
</dbReference>
<dbReference type="Ensembl" id="ENSTNIT00000006558.1">
    <property type="protein sequence ID" value="ENSTNIP00000006409.1"/>
    <property type="gene ID" value="ENSTNIG00000003808.1"/>
</dbReference>
<dbReference type="KEGG" id="tng:GSTEN00010111G001"/>
<dbReference type="GeneTree" id="ENSGT01110000267146"/>
<dbReference type="HOGENOM" id="CLU_028534_2_1_1"/>
<dbReference type="InParanoid" id="Q49LS7"/>
<dbReference type="OMA" id="PKLWRPP"/>
<dbReference type="OrthoDB" id="8940282at2759"/>
<dbReference type="TreeFam" id="TF316454"/>
<dbReference type="Proteomes" id="UP000007303">
    <property type="component" value="Unassembled WGS sequence"/>
</dbReference>
<dbReference type="GO" id="GO:0005886">
    <property type="term" value="C:plasma membrane"/>
    <property type="evidence" value="ECO:0000250"/>
    <property type="project" value="UniProtKB"/>
</dbReference>
<dbReference type="GO" id="GO:1902742">
    <property type="term" value="P:apoptotic process involved in development"/>
    <property type="evidence" value="ECO:0007669"/>
    <property type="project" value="TreeGrafter"/>
</dbReference>
<dbReference type="GO" id="GO:0043652">
    <property type="term" value="P:engulfment of apoptotic cell"/>
    <property type="evidence" value="ECO:0000250"/>
    <property type="project" value="UniProtKB"/>
</dbReference>
<dbReference type="GO" id="GO:0070782">
    <property type="term" value="P:phosphatidylserine exposure on apoptotic cell surface"/>
    <property type="evidence" value="ECO:0000250"/>
    <property type="project" value="UniProtKB"/>
</dbReference>
<dbReference type="InterPro" id="IPR018629">
    <property type="entry name" value="XK-rel"/>
</dbReference>
<dbReference type="InterPro" id="IPR050895">
    <property type="entry name" value="XK-related_scramblase"/>
</dbReference>
<dbReference type="PANTHER" id="PTHR16024">
    <property type="entry name" value="XK-RELATED PROTEIN"/>
    <property type="match status" value="1"/>
</dbReference>
<dbReference type="PANTHER" id="PTHR16024:SF8">
    <property type="entry name" value="XK-RELATED PROTEIN 8"/>
    <property type="match status" value="1"/>
</dbReference>
<dbReference type="Pfam" id="PF09815">
    <property type="entry name" value="XK-related"/>
    <property type="match status" value="1"/>
</dbReference>
<comment type="function">
    <text evidence="1">Phospholipid scramblase that promotes phosphatidylserine exposure on apoptotic cell surface, possibly by mediating phospholipid scrambling. Phosphatidylserine is a specific marker only present at the surface of apoptotic cells and acts as a specific signal for engulfment.</text>
</comment>
<comment type="catalytic activity">
    <reaction evidence="1">
        <text>a 1,2-diacyl-sn-glycero-3-phospho-L-serine(in) = a 1,2-diacyl-sn-glycero-3-phospho-L-serine(out)</text>
        <dbReference type="Rhea" id="RHEA:38663"/>
        <dbReference type="ChEBI" id="CHEBI:57262"/>
    </reaction>
</comment>
<comment type="subcellular location">
    <subcellularLocation>
        <location evidence="1">Cell membrane</location>
        <topology evidence="2">Multi-pass membrane protein</topology>
    </subcellularLocation>
</comment>
<comment type="similarity">
    <text evidence="4">Belongs to the XK family.</text>
</comment>
<comment type="sequence caution" evidence="4">
    <conflict type="erroneous gene model prediction">
        <sequence resource="EMBL-CDS" id="CAF94153"/>
    </conflict>
</comment>
<gene>
    <name evidence="1" type="primary">xkr8</name>
    <name evidence="3" type="synonym">xrg8</name>
    <name type="ORF">GSTENG00010111001</name>
</gene>
<sequence length="404" mass="46566">MEQPSIYNYSWVDFVFSVIGVFTFFVDWGADVWVATEFYRRGDFFWFGVLVGLMVLSSVLVQMFSWFWLQYDRGLPDLQTGGGTVLFGDRLRLSCLLHVLQLGFLCRHISAIRQGFRVWWRKEEGSEYAFYLSHDLSMLRLIETFSESAPQLTLMIYVMLRTQRARAVQFVSVAASTTSIAWMVVDYHRCLRSFLPDKARQGWASSLIYFLWNLLLIAPRVAALALFASVVGGYLGLHLLLLWLVFVTWAWLQRTHFMDSPGGEWLYRATVGIIWYFSWFNVAEGRTRGRSAIYHAFITADGAILLVTWWCCREPVQAEPYALALLLTLLLSYLLGLLFKSLYYCCFHPTLWRPPAREPGLPDDLPDADVTFRHLSIQDGAPASRPLNRRMALHAADFYSARTS</sequence>
<feature type="chain" id="PRO_0000190795" description="XK-related protein 8">
    <location>
        <begin position="1"/>
        <end position="404"/>
    </location>
</feature>
<feature type="transmembrane region" description="Helical" evidence="2">
    <location>
        <begin position="14"/>
        <end position="34"/>
    </location>
</feature>
<feature type="transmembrane region" description="Helical" evidence="2">
    <location>
        <begin position="44"/>
        <end position="64"/>
    </location>
</feature>
<feature type="transmembrane region" description="Helical" evidence="2">
    <location>
        <begin position="167"/>
        <end position="187"/>
    </location>
</feature>
<feature type="transmembrane region" description="Helical" evidence="2">
    <location>
        <begin position="206"/>
        <end position="226"/>
    </location>
</feature>
<feature type="transmembrane region" description="Helical" evidence="2">
    <location>
        <begin position="227"/>
        <end position="247"/>
    </location>
</feature>
<feature type="transmembrane region" description="Helical" evidence="2">
    <location>
        <begin position="263"/>
        <end position="283"/>
    </location>
</feature>
<feature type="transmembrane region" description="Helical" evidence="2">
    <location>
        <begin position="292"/>
        <end position="312"/>
    </location>
</feature>
<feature type="transmembrane region" description="Helical" evidence="2">
    <location>
        <begin position="319"/>
        <end position="339"/>
    </location>
</feature>
<keyword id="KW-0053">Apoptosis</keyword>
<keyword id="KW-1003">Cell membrane</keyword>
<keyword id="KW-0472">Membrane</keyword>
<keyword id="KW-1185">Reference proteome</keyword>
<keyword id="KW-0812">Transmembrane</keyword>
<keyword id="KW-1133">Transmembrane helix</keyword>
<name>XKR8_TETNG</name>
<evidence type="ECO:0000250" key="1">
    <source>
        <dbReference type="UniProtKB" id="Q9H6D3"/>
    </source>
</evidence>
<evidence type="ECO:0000255" key="2"/>
<evidence type="ECO:0000303" key="3">
    <source ref="1"/>
</evidence>
<evidence type="ECO:0000305" key="4"/>
<proteinExistence type="evidence at transcript level"/>
<organism>
    <name type="scientific">Tetraodon nigroviridis</name>
    <name type="common">Spotted green pufferfish</name>
    <name type="synonym">Chelonodon nigroviridis</name>
    <dbReference type="NCBI Taxonomy" id="99883"/>
    <lineage>
        <taxon>Eukaryota</taxon>
        <taxon>Metazoa</taxon>
        <taxon>Chordata</taxon>
        <taxon>Craniata</taxon>
        <taxon>Vertebrata</taxon>
        <taxon>Euteleostomi</taxon>
        <taxon>Actinopterygii</taxon>
        <taxon>Neopterygii</taxon>
        <taxon>Teleostei</taxon>
        <taxon>Neoteleostei</taxon>
        <taxon>Acanthomorphata</taxon>
        <taxon>Eupercaria</taxon>
        <taxon>Tetraodontiformes</taxon>
        <taxon>Tetradontoidea</taxon>
        <taxon>Tetraodontidae</taxon>
        <taxon>Tetraodon</taxon>
    </lineage>
</organism>
<protein>
    <recommendedName>
        <fullName evidence="4">XK-related protein 8</fullName>
    </recommendedName>
</protein>
<reference key="1">
    <citation type="submission" date="2004-07" db="EMBL/GenBank/DDBJ databases">
        <title>A superfamily of XK-related genes (XRG) widely expressed in vertebrates and invertebrates.</title>
        <authorList>
            <person name="Huang C.-H."/>
            <person name="Chen Y."/>
        </authorList>
    </citation>
    <scope>NUCLEOTIDE SEQUENCE [MRNA]</scope>
</reference>
<reference key="2">
    <citation type="journal article" date="2004" name="Nature">
        <title>Genome duplication in the teleost fish Tetraodon nigroviridis reveals the early vertebrate proto-karyotype.</title>
        <authorList>
            <person name="Jaillon O."/>
            <person name="Aury J.-M."/>
            <person name="Brunet F."/>
            <person name="Petit J.-L."/>
            <person name="Stange-Thomann N."/>
            <person name="Mauceli E."/>
            <person name="Bouneau L."/>
            <person name="Fischer C."/>
            <person name="Ozouf-Costaz C."/>
            <person name="Bernot A."/>
            <person name="Nicaud S."/>
            <person name="Jaffe D."/>
            <person name="Fisher S."/>
            <person name="Lutfalla G."/>
            <person name="Dossat C."/>
            <person name="Segurens B."/>
            <person name="Dasilva C."/>
            <person name="Salanoubat M."/>
            <person name="Levy M."/>
            <person name="Boudet N."/>
            <person name="Castellano S."/>
            <person name="Anthouard V."/>
            <person name="Jubin C."/>
            <person name="Castelli V."/>
            <person name="Katinka M."/>
            <person name="Vacherie B."/>
            <person name="Biemont C."/>
            <person name="Skalli Z."/>
            <person name="Cattolico L."/>
            <person name="Poulain J."/>
            <person name="De Berardinis V."/>
            <person name="Cruaud C."/>
            <person name="Duprat S."/>
            <person name="Brottier P."/>
            <person name="Coutanceau J.-P."/>
            <person name="Gouzy J."/>
            <person name="Parra G."/>
            <person name="Lardier G."/>
            <person name="Chapple C."/>
            <person name="McKernan K.J."/>
            <person name="McEwan P."/>
            <person name="Bosak S."/>
            <person name="Kellis M."/>
            <person name="Volff J.-N."/>
            <person name="Guigo R."/>
            <person name="Zody M.C."/>
            <person name="Mesirov J."/>
            <person name="Lindblad-Toh K."/>
            <person name="Birren B."/>
            <person name="Nusbaum C."/>
            <person name="Kahn D."/>
            <person name="Robinson-Rechavi M."/>
            <person name="Laudet V."/>
            <person name="Schachter V."/>
            <person name="Quetier F."/>
            <person name="Saurin W."/>
            <person name="Scarpelli C."/>
            <person name="Wincker P."/>
            <person name="Lander E.S."/>
            <person name="Weissenbach J."/>
            <person name="Roest Crollius H."/>
        </authorList>
    </citation>
    <scope>NUCLEOTIDE SEQUENCE [LARGE SCALE GENOMIC DNA]</scope>
</reference>